<name>KVD24_HUMAN</name>
<protein>
    <recommendedName>
        <fullName evidence="11">Probable non-functional immunoglobulin kappa variable 2D-24</fullName>
    </recommendedName>
</protein>
<dbReference type="EMBL" id="AC245506">
    <property type="status" value="NOT_ANNOTATED_CDS"/>
    <property type="molecule type" value="Genomic_DNA"/>
</dbReference>
<dbReference type="SMR" id="A0A075B6R9"/>
<dbReference type="FunCoup" id="A0A075B6R9">
    <property type="interactions" value="266"/>
</dbReference>
<dbReference type="IntAct" id="A0A075B6R9">
    <property type="interactions" value="2"/>
</dbReference>
<dbReference type="BioMuta" id="IGKV2D-24"/>
<dbReference type="jPOST" id="A0A075B6R9"/>
<dbReference type="MassIVE" id="A0A075B6R9"/>
<dbReference type="Ensembl" id="ENST00000462693.1">
    <property type="protein sequence ID" value="ENSP00000417136.1"/>
    <property type="gene ID" value="ENSG00000241566.1"/>
</dbReference>
<dbReference type="UCSC" id="uc061lrs.1">
    <property type="organism name" value="human"/>
</dbReference>
<dbReference type="AGR" id="HGNC:5797"/>
<dbReference type="GeneCards" id="IGKV2D-24"/>
<dbReference type="HGNC" id="HGNC:5797">
    <property type="gene designation" value="IGKV2D-24"/>
</dbReference>
<dbReference type="HPA" id="ENSG00000241566">
    <property type="expression patterns" value="Tissue enhanced (intestine, lymphoid tissue, urinary bladder)"/>
</dbReference>
<dbReference type="neXtProt" id="NX_A0A075B6R9"/>
<dbReference type="OpenTargets" id="ENSG00000241566"/>
<dbReference type="VEuPathDB" id="HostDB:ENSG00000241566"/>
<dbReference type="GeneTree" id="ENSGT00940000163554"/>
<dbReference type="HOGENOM" id="CLU_077975_4_1_1"/>
<dbReference type="InParanoid" id="A0A075B6R9"/>
<dbReference type="OMA" id="CCQGTHY"/>
<dbReference type="OrthoDB" id="9585527at2759"/>
<dbReference type="PAN-GO" id="A0A075B6R9">
    <property type="GO annotations" value="3 GO annotations based on evolutionary models"/>
</dbReference>
<dbReference type="PhylomeDB" id="A0A075B6R9"/>
<dbReference type="PRO" id="PR:A0A075B6R9"/>
<dbReference type="Proteomes" id="UP000005640">
    <property type="component" value="Chromosome 2"/>
</dbReference>
<dbReference type="RNAct" id="A0A075B6R9">
    <property type="molecule type" value="protein"/>
</dbReference>
<dbReference type="Bgee" id="ENSG00000241566">
    <property type="expression patterns" value="Expressed in duodenum and 71 other cell types or tissues"/>
</dbReference>
<dbReference type="GO" id="GO:0005576">
    <property type="term" value="C:extracellular region"/>
    <property type="evidence" value="ECO:0007669"/>
    <property type="project" value="UniProtKB-SubCell"/>
</dbReference>
<dbReference type="GO" id="GO:0019814">
    <property type="term" value="C:immunoglobulin complex"/>
    <property type="evidence" value="ECO:0000318"/>
    <property type="project" value="GO_Central"/>
</dbReference>
<dbReference type="GO" id="GO:0005886">
    <property type="term" value="C:plasma membrane"/>
    <property type="evidence" value="ECO:0007669"/>
    <property type="project" value="UniProtKB-SubCell"/>
</dbReference>
<dbReference type="GO" id="GO:0002250">
    <property type="term" value="P:adaptive immune response"/>
    <property type="evidence" value="ECO:0007669"/>
    <property type="project" value="UniProtKB-KW"/>
</dbReference>
<dbReference type="GO" id="GO:0006955">
    <property type="term" value="P:immune response"/>
    <property type="evidence" value="ECO:0000318"/>
    <property type="project" value="GO_Central"/>
</dbReference>
<dbReference type="FunFam" id="2.60.40.10:FF:000365">
    <property type="entry name" value="If kappa light chain"/>
    <property type="match status" value="1"/>
</dbReference>
<dbReference type="Gene3D" id="2.60.40.10">
    <property type="entry name" value="Immunoglobulins"/>
    <property type="match status" value="1"/>
</dbReference>
<dbReference type="InterPro" id="IPR007110">
    <property type="entry name" value="Ig-like_dom"/>
</dbReference>
<dbReference type="InterPro" id="IPR036179">
    <property type="entry name" value="Ig-like_dom_sf"/>
</dbReference>
<dbReference type="InterPro" id="IPR013783">
    <property type="entry name" value="Ig-like_fold"/>
</dbReference>
<dbReference type="InterPro" id="IPR013106">
    <property type="entry name" value="Ig_V-set"/>
</dbReference>
<dbReference type="InterPro" id="IPR050150">
    <property type="entry name" value="IgV_Light_Chain"/>
</dbReference>
<dbReference type="PANTHER" id="PTHR23267">
    <property type="entry name" value="IMMUNOGLOBULIN LIGHT CHAIN"/>
    <property type="match status" value="1"/>
</dbReference>
<dbReference type="Pfam" id="PF07686">
    <property type="entry name" value="V-set"/>
    <property type="match status" value="1"/>
</dbReference>
<dbReference type="SMART" id="SM00406">
    <property type="entry name" value="IGv"/>
    <property type="match status" value="1"/>
</dbReference>
<dbReference type="SUPFAM" id="SSF48726">
    <property type="entry name" value="Immunoglobulin"/>
    <property type="match status" value="1"/>
</dbReference>
<dbReference type="PROSITE" id="PS50835">
    <property type="entry name" value="IG_LIKE"/>
    <property type="match status" value="1"/>
</dbReference>
<proteinExistence type="evidence at protein level"/>
<feature type="signal peptide" evidence="2">
    <location>
        <begin position="1"/>
        <end position="19"/>
    </location>
</feature>
<feature type="chain" id="PRO_5001705261" description="Probable non-functional immunoglobulin kappa variable 2D-24" evidence="2">
    <location>
        <begin position="20"/>
        <end position="120"/>
    </location>
</feature>
<feature type="domain" description="Ig-like" evidence="3">
    <location>
        <begin position="20"/>
        <end position="120" status="greater than"/>
    </location>
</feature>
<feature type="region of interest" description="Framework-1" evidence="1">
    <location>
        <begin position="21"/>
        <end position="43"/>
    </location>
</feature>
<feature type="region of interest" description="Complementarity-determining-1" evidence="1">
    <location>
        <begin position="44"/>
        <end position="59"/>
    </location>
</feature>
<feature type="region of interest" description="Framework-2" evidence="1">
    <location>
        <begin position="60"/>
        <end position="74"/>
    </location>
</feature>
<feature type="region of interest" description="Complementarity-determining-2" evidence="1">
    <location>
        <begin position="75"/>
        <end position="81"/>
    </location>
</feature>
<feature type="region of interest" description="Framework-3" evidence="1">
    <location>
        <begin position="82"/>
        <end position="113"/>
    </location>
</feature>
<feature type="region of interest" description="Complementarity-determining-3" evidence="1">
    <location>
        <begin position="114"/>
        <end position="120" status="greater than"/>
    </location>
</feature>
<feature type="non-terminal residue">
    <location>
        <position position="120"/>
    </location>
</feature>
<comment type="function">
    <text evidence="5 6 7 8 9">Probable non-functional open reading frame (ORF) of V region of the variable domain of immunoglobulin light chains (PubMed:24600447). Non-functional ORF generally cannot participate in the synthesis of a productive immunoglobulin chain due to altered V-(D)-J or switch recombination and/or splicing site (at mRNA level) and/or conserved amino acid change (protein level) (PubMed:9619395). Immunoglobulins, also known as antibodies, are membrane-bound or secreted glycoproteins produced by B lymphocytes. In the recognition phase of humoral immunity, the membrane-bound immunoglobulins serve as receptors which, upon binding of a specific antigen, trigger the clonal expansion and differentiation of B lymphocytes into immunoglobulins-secreting plasma cells. Secreted immunoglobulins mediate the effector phase of humoral immunity, which results in the elimination of bound antigens (PubMed:20176268, PubMed:22158414). The antigen binding site is formed by the variable domain of one heavy chain, together with that of its associated light chain. Thus, each immunoglobulin has two antigen binding sites with remarkable affinity for a particular antigen. The variable domains are assembled by a process called V-(D)-J rearrangement and can then be subjected to somatic hypermutations which, after exposure to antigen and selection, allow affinity maturation for a particular antigen (PubMed:17576170, PubMed:20176268).</text>
</comment>
<comment type="subunit">
    <text evidence="6 11">Most probably, the immunoglobulin is not assembled due to incorrect folding of light chain (Probable). Immunoglobulins are composed of two identical heavy chains and two identical light chains; disulfide-linked.</text>
</comment>
<comment type="subcellular location">
    <subcellularLocation>
        <location evidence="6 7">Secreted</location>
    </subcellularLocation>
    <subcellularLocation>
        <location evidence="6 7">Cell membrane</location>
    </subcellularLocation>
</comment>
<comment type="polymorphism">
    <text evidence="11">There are several alleles. The sequence shown is that of IMGT allele IGKV2D-24*01.</text>
</comment>
<comment type="caution">
    <text evidence="9 11">Most probably a non-functional protein that cannot participate in the synthesis of a productive immunoglobulin chain due to a mutation at position 43, corresponding to the first cysteine from the disulfide bridge, potentially leading to uncorrect folding (PubMed:9619395).</text>
</comment>
<organism>
    <name type="scientific">Homo sapiens</name>
    <name type="common">Human</name>
    <dbReference type="NCBI Taxonomy" id="9606"/>
    <lineage>
        <taxon>Eukaryota</taxon>
        <taxon>Metazoa</taxon>
        <taxon>Chordata</taxon>
        <taxon>Craniata</taxon>
        <taxon>Vertebrata</taxon>
        <taxon>Euteleostomi</taxon>
        <taxon>Mammalia</taxon>
        <taxon>Eutheria</taxon>
        <taxon>Euarchontoglires</taxon>
        <taxon>Primates</taxon>
        <taxon>Haplorrhini</taxon>
        <taxon>Catarrhini</taxon>
        <taxon>Hominidae</taxon>
        <taxon>Homo</taxon>
    </lineage>
</organism>
<gene>
    <name evidence="4 10 12" type="primary">IGKV2D-24</name>
</gene>
<sequence>MRLLAQLLGLLMLWVPGSSGDIVMTQTPLSSPVTLGQPASISFRSSQSLVHSDGNTYLSWLQQRPGQPPRLLIYKVSNRFSGVPDRFSGSGAGTDFTLKISRVEAEDVGVYYCTQATQFP</sequence>
<accession>A0A075B6R9</accession>
<evidence type="ECO:0000250" key="1">
    <source>
        <dbReference type="UniProtKB" id="P01602"/>
    </source>
</evidence>
<evidence type="ECO:0000255" key="2"/>
<evidence type="ECO:0000255" key="3">
    <source>
        <dbReference type="PROSITE-ProRule" id="PRU00114"/>
    </source>
</evidence>
<evidence type="ECO:0000303" key="4">
    <source>
    </source>
</evidence>
<evidence type="ECO:0000303" key="5">
    <source>
    </source>
</evidence>
<evidence type="ECO:0000303" key="6">
    <source>
    </source>
</evidence>
<evidence type="ECO:0000303" key="7">
    <source>
    </source>
</evidence>
<evidence type="ECO:0000303" key="8">
    <source>
    </source>
</evidence>
<evidence type="ECO:0000303" key="9">
    <source>
    </source>
</evidence>
<evidence type="ECO:0000303" key="10">
    <source ref="4"/>
</evidence>
<evidence type="ECO:0000305" key="11"/>
<evidence type="ECO:0000312" key="12">
    <source>
        <dbReference type="HGNC" id="HGNC:5797"/>
    </source>
</evidence>
<keyword id="KW-1064">Adaptive immunity</keyword>
<keyword id="KW-1003">Cell membrane</keyword>
<keyword id="KW-0391">Immunity</keyword>
<keyword id="KW-1280">Immunoglobulin</keyword>
<keyword id="KW-0393">Immunoglobulin domain</keyword>
<keyword id="KW-0472">Membrane</keyword>
<keyword id="KW-1267">Proteomics identification</keyword>
<keyword id="KW-1185">Reference proteome</keyword>
<keyword id="KW-0964">Secreted</keyword>
<keyword id="KW-0732">Signal</keyword>
<reference key="1">
    <citation type="journal article" date="2005" name="Nature">
        <title>Generation and annotation of the DNA sequences of human chromosomes 2 and 4.</title>
        <authorList>
            <person name="Hillier L.W."/>
            <person name="Graves T.A."/>
            <person name="Fulton R.S."/>
            <person name="Fulton L.A."/>
            <person name="Pepin K.H."/>
            <person name="Minx P."/>
            <person name="Wagner-McPherson C."/>
            <person name="Layman D."/>
            <person name="Wylie K."/>
            <person name="Sekhon M."/>
            <person name="Becker M.C."/>
            <person name="Fewell G.A."/>
            <person name="Delehaunty K.D."/>
            <person name="Miner T.L."/>
            <person name="Nash W.E."/>
            <person name="Kremitzki C."/>
            <person name="Oddy L."/>
            <person name="Du H."/>
            <person name="Sun H."/>
            <person name="Bradshaw-Cordum H."/>
            <person name="Ali J."/>
            <person name="Carter J."/>
            <person name="Cordes M."/>
            <person name="Harris A."/>
            <person name="Isak A."/>
            <person name="van Brunt A."/>
            <person name="Nguyen C."/>
            <person name="Du F."/>
            <person name="Courtney L."/>
            <person name="Kalicki J."/>
            <person name="Ozersky P."/>
            <person name="Abbott S."/>
            <person name="Armstrong J."/>
            <person name="Belter E.A."/>
            <person name="Caruso L."/>
            <person name="Cedroni M."/>
            <person name="Cotton M."/>
            <person name="Davidson T."/>
            <person name="Desai A."/>
            <person name="Elliott G."/>
            <person name="Erb T."/>
            <person name="Fronick C."/>
            <person name="Gaige T."/>
            <person name="Haakenson W."/>
            <person name="Haglund K."/>
            <person name="Holmes A."/>
            <person name="Harkins R."/>
            <person name="Kim K."/>
            <person name="Kruchowski S.S."/>
            <person name="Strong C.M."/>
            <person name="Grewal N."/>
            <person name="Goyea E."/>
            <person name="Hou S."/>
            <person name="Levy A."/>
            <person name="Martinka S."/>
            <person name="Mead K."/>
            <person name="McLellan M.D."/>
            <person name="Meyer R."/>
            <person name="Randall-Maher J."/>
            <person name="Tomlinson C."/>
            <person name="Dauphin-Kohlberg S."/>
            <person name="Kozlowicz-Reilly A."/>
            <person name="Shah N."/>
            <person name="Swearengen-Shahid S."/>
            <person name="Snider J."/>
            <person name="Strong J.T."/>
            <person name="Thompson J."/>
            <person name="Yoakum M."/>
            <person name="Leonard S."/>
            <person name="Pearman C."/>
            <person name="Trani L."/>
            <person name="Radionenko M."/>
            <person name="Waligorski J.E."/>
            <person name="Wang C."/>
            <person name="Rock S.M."/>
            <person name="Tin-Wollam A.-M."/>
            <person name="Maupin R."/>
            <person name="Latreille P."/>
            <person name="Wendl M.C."/>
            <person name="Yang S.-P."/>
            <person name="Pohl C."/>
            <person name="Wallis J.W."/>
            <person name="Spieth J."/>
            <person name="Bieri T.A."/>
            <person name="Berkowicz N."/>
            <person name="Nelson J.O."/>
            <person name="Osborne J."/>
            <person name="Ding L."/>
            <person name="Meyer R."/>
            <person name="Sabo A."/>
            <person name="Shotland Y."/>
            <person name="Sinha P."/>
            <person name="Wohldmann P.E."/>
            <person name="Cook L.L."/>
            <person name="Hickenbotham M.T."/>
            <person name="Eldred J."/>
            <person name="Williams D."/>
            <person name="Jones T.A."/>
            <person name="She X."/>
            <person name="Ciccarelli F.D."/>
            <person name="Izaurralde E."/>
            <person name="Taylor J."/>
            <person name="Schmutz J."/>
            <person name="Myers R.M."/>
            <person name="Cox D.R."/>
            <person name="Huang X."/>
            <person name="McPherson J.D."/>
            <person name="Mardis E.R."/>
            <person name="Clifton S.W."/>
            <person name="Warren W.C."/>
            <person name="Chinwalla A.T."/>
            <person name="Eddy S.R."/>
            <person name="Marra M.A."/>
            <person name="Ovcharenko I."/>
            <person name="Furey T.S."/>
            <person name="Miller W."/>
            <person name="Eichler E.E."/>
            <person name="Bork P."/>
            <person name="Suyama M."/>
            <person name="Torrents D."/>
            <person name="Waterston R.H."/>
            <person name="Wilson R.K."/>
        </authorList>
    </citation>
    <scope>NUCLEOTIDE SEQUENCE [LARGE SCALE GENOMIC DNA] (IMGT ALLELE IGKV2D-24*01)</scope>
</reference>
<reference key="2">
    <citation type="journal article" date="1998" name="Exp. Clin. Immunogenet.">
        <title>IMGT (ImMunoGeneTics) locus on focus. A new section of Experimental and Clinical Immunogenetics.</title>
        <authorList>
            <person name="Lefranc M.P."/>
        </authorList>
    </citation>
    <scope>CHARACTERIZATION</scope>
</reference>
<reference key="3">
    <citation type="journal article" date="2001" name="Exp. Clin. Immunogenet.">
        <title>Nomenclature of the human immunoglobulin heavy (IGH) genes.</title>
        <authorList>
            <person name="Lefranc M.P."/>
        </authorList>
    </citation>
    <scope>NOMENCLATURE</scope>
</reference>
<reference key="4">
    <citation type="book" date="2001" name="The Immunoglobulin FactsBook.">
        <title>The Immunoglobulin FactsBook.</title>
        <editorList>
            <person name="Lefranc M.P."/>
            <person name="Lefranc G."/>
        </editorList>
        <authorList>
            <person name="Lefranc M.P."/>
            <person name="Lefranc G."/>
        </authorList>
    </citation>
    <scope>NOMENCLATURE</scope>
</reference>
<reference key="5">
    <citation type="journal article" date="2007" name="Annu. Rev. Genet.">
        <title>Immunoglobulin somatic hypermutation.</title>
        <authorList>
            <person name="Teng G."/>
            <person name="Papavasiliou F.N."/>
        </authorList>
    </citation>
    <scope>REVIEW ON SOMATIC HYPERMUTATION</scope>
</reference>
<reference key="6">
    <citation type="journal article" date="2010" name="J. Allergy Clin. Immunol.">
        <title>Structure and function of immunoglobulins.</title>
        <authorList>
            <person name="Schroeder H.W. Jr."/>
            <person name="Cavacini L."/>
        </authorList>
    </citation>
    <scope>REVIEW ON IMMUNOGLOBULINS</scope>
</reference>
<reference key="7">
    <citation type="journal article" date="2012" name="Nat. Rev. Immunol.">
        <title>Molecular programming of B cell memory.</title>
        <authorList>
            <person name="McHeyzer-Williams M."/>
            <person name="Okitsu S."/>
            <person name="Wang N."/>
            <person name="McHeyzer-Williams L."/>
        </authorList>
    </citation>
    <scope>REVIEW ON FUNCTION</scope>
</reference>
<reference key="8">
    <citation type="journal article" date="2014" name="Front. Immunol.">
        <title>Immunoglobulin and T Cell Receptor Genes: IMGT((R)) and the Birth and Rise of Immunoinformatics.</title>
        <authorList>
            <person name="Lefranc M.P."/>
        </authorList>
    </citation>
    <scope>NOMENCLATURE</scope>
</reference>